<comment type="function">
    <text evidence="1">Receptor for the lysosphingolipid sphingosine 1-phosphate (S1P). S1P is a bioactive lysophospholipid that elicits diverse physiological effect on most types of cells and tissues. Is coupled to both the G(i/0)alpha and G(12) subclass of heteromeric G-proteins (By similarity). May play a regulatory role in the transformation of radial glial cells into astrocytes and may affect proliferative activity of these cells.</text>
</comment>
<comment type="interaction">
    <interactant intactId="EBI-2564169">
        <id>Q9H228</id>
    </interactant>
    <interactant intactId="EBI-17458373">
        <id>P48165</id>
        <label>GJA8</label>
    </interactant>
    <organismsDiffer>false</organismsDiffer>
    <experiments>3</experiments>
</comment>
<comment type="interaction">
    <interactant intactId="EBI-2564169">
        <id>Q9H228</id>
    </interactant>
    <interactant intactId="EBI-17280858">
        <id>Q8WWF3</id>
        <label>SSMEM1</label>
    </interactant>
    <organismsDiffer>false</organismsDiffer>
    <experiments>3</experiments>
</comment>
<comment type="subcellular location">
    <subcellularLocation>
        <location>Cell membrane</location>
        <topology>Multi-pass membrane protein</topology>
    </subcellularLocation>
</comment>
<comment type="alternative products">
    <event type="alternative splicing"/>
    <isoform>
        <id>Q9H228-1</id>
        <name>1</name>
        <sequence type="displayed"/>
    </isoform>
    <isoform>
        <id>Q9H228-2</id>
        <name>2</name>
        <sequence type="described" ref="VSP_013369 VSP_013370"/>
    </isoform>
</comment>
<comment type="tissue specificity">
    <text evidence="6 7 8">Widely expressed in the brain, most prominently in the corpus callosum, which is predominantly white matter. Detected in spleen, peripheral blood leukocytes, placenta, lung, aorta and fetal spleen. Low-level signal detected in many tissue extracts. Overexpressed in leukemic large granular lymphocytes. Isoform 1 is predominantly expressed in peripheral tissues. Isoform 2 is expressed in brain, spleen and peripheral blood leukocytes.</text>
</comment>
<comment type="developmental stage">
    <text evidence="9">At 24 weeks of gestation, fragments of radial glial fibers are positive within the cortical plate and subplate of allocortical areas. These positive fragments often appear enlarged as varicosities and some of them terminate at blood vessels. Between 28 and 30 weeks of gestation, all iso- and allocortical areas contain immunolabeled radial glial fibers revealing curvature next to sulci. After 32 weeks of gestation, radial glial fibers gradually disappear; instead positive transitional stages between radial glia and astrocytes were found.</text>
</comment>
<comment type="similarity">
    <text evidence="4">Belongs to the G-protein coupled receptor 1 family.</text>
</comment>
<proteinExistence type="evidence at protein level"/>
<evidence type="ECO:0000250" key="1"/>
<evidence type="ECO:0000250" key="2">
    <source>
        <dbReference type="UniProtKB" id="Q9JKM5"/>
    </source>
</evidence>
<evidence type="ECO:0000255" key="3"/>
<evidence type="ECO:0000255" key="4">
    <source>
        <dbReference type="PROSITE-ProRule" id="PRU00521"/>
    </source>
</evidence>
<evidence type="ECO:0000256" key="5">
    <source>
        <dbReference type="SAM" id="MobiDB-lite"/>
    </source>
</evidence>
<evidence type="ECO:0000269" key="6">
    <source>
    </source>
</evidence>
<evidence type="ECO:0000269" key="7">
    <source>
    </source>
</evidence>
<evidence type="ECO:0000269" key="8">
    <source>
    </source>
</evidence>
<evidence type="ECO:0000269" key="9">
    <source>
    </source>
</evidence>
<evidence type="ECO:0000303" key="10">
    <source>
    </source>
</evidence>
<evidence type="ECO:0007829" key="11">
    <source>
        <dbReference type="PDB" id="7EW1"/>
    </source>
</evidence>
<evidence type="ECO:0007829" key="12">
    <source>
        <dbReference type="PDB" id="7YXA"/>
    </source>
</evidence>
<keyword id="KW-0002">3D-structure</keyword>
<keyword id="KW-0025">Alternative splicing</keyword>
<keyword id="KW-1003">Cell membrane</keyword>
<keyword id="KW-0297">G-protein coupled receptor</keyword>
<keyword id="KW-0325">Glycoprotein</keyword>
<keyword id="KW-0449">Lipoprotein</keyword>
<keyword id="KW-0472">Membrane</keyword>
<keyword id="KW-0564">Palmitate</keyword>
<keyword id="KW-0597">Phosphoprotein</keyword>
<keyword id="KW-1267">Proteomics identification</keyword>
<keyword id="KW-0675">Receptor</keyword>
<keyword id="KW-1185">Reference proteome</keyword>
<keyword id="KW-0807">Transducer</keyword>
<keyword id="KW-0812">Transmembrane</keyword>
<keyword id="KW-1133">Transmembrane helix</keyword>
<dbReference type="EMBL" id="AF331840">
    <property type="protein sequence ID" value="AAL57041.1"/>
    <property type="molecule type" value="mRNA"/>
</dbReference>
<dbReference type="EMBL" id="AK074661">
    <property type="protein sequence ID" value="BAC11119.1"/>
    <property type="molecule type" value="mRNA"/>
</dbReference>
<dbReference type="EMBL" id="AF317676">
    <property type="protein sequence ID" value="AAG38113.1"/>
    <property type="molecule type" value="Genomic_DNA"/>
</dbReference>
<dbReference type="EMBL" id="AY262689">
    <property type="protein sequence ID" value="AAP20653.1"/>
    <property type="molecule type" value="Genomic_DNA"/>
</dbReference>
<dbReference type="EMBL" id="AB083602">
    <property type="protein sequence ID" value="BAB89315.1"/>
    <property type="molecule type" value="Genomic_DNA"/>
</dbReference>
<dbReference type="EMBL" id="AC011461">
    <property type="status" value="NOT_ANNOTATED_CDS"/>
    <property type="molecule type" value="Genomic_DNA"/>
</dbReference>
<dbReference type="EMBL" id="BC034703">
    <property type="protein sequence ID" value="AAH34703.1"/>
    <property type="molecule type" value="mRNA"/>
</dbReference>
<dbReference type="EMBL" id="BC067781">
    <property type="protein sequence ID" value="AAH67781.1"/>
    <property type="molecule type" value="mRNA"/>
</dbReference>
<dbReference type="CCDS" id="CCDS12240.1">
    <molecule id="Q9H228-1"/>
</dbReference>
<dbReference type="RefSeq" id="NP_001159687.1">
    <molecule id="Q9H228-1"/>
    <property type="nucleotide sequence ID" value="NM_001166215.2"/>
</dbReference>
<dbReference type="RefSeq" id="NP_110387.1">
    <molecule id="Q9H228-1"/>
    <property type="nucleotide sequence ID" value="NM_030760.5"/>
</dbReference>
<dbReference type="PDB" id="7EW1">
    <property type="method" value="EM"/>
    <property type="resolution" value="3.40 A"/>
    <property type="chains" value="A=1-344"/>
</dbReference>
<dbReference type="PDB" id="7YXA">
    <property type="method" value="X-ray"/>
    <property type="resolution" value="2.20 A"/>
    <property type="chains" value="A/B=1-223, A/B=241-321"/>
</dbReference>
<dbReference type="PDBsum" id="7EW1"/>
<dbReference type="PDBsum" id="7YXA"/>
<dbReference type="EMDB" id="EMD-31344"/>
<dbReference type="SMR" id="Q9H228"/>
<dbReference type="BioGRID" id="119793">
    <property type="interactions" value="17"/>
</dbReference>
<dbReference type="CORUM" id="Q9H228"/>
<dbReference type="FunCoup" id="Q9H228">
    <property type="interactions" value="1136"/>
</dbReference>
<dbReference type="IntAct" id="Q9H228">
    <property type="interactions" value="13"/>
</dbReference>
<dbReference type="MINT" id="Q9H228"/>
<dbReference type="STRING" id="9606.ENSP00000328472"/>
<dbReference type="BindingDB" id="Q9H228"/>
<dbReference type="ChEMBL" id="CHEMBL2274"/>
<dbReference type="DrugBank" id="DB11819">
    <property type="generic name" value="ASP-4058"/>
</dbReference>
<dbReference type="DrugBank" id="DB14766">
    <property type="generic name" value="Etrasimod"/>
</dbReference>
<dbReference type="DrugBank" id="DB08868">
    <property type="generic name" value="Fingolimod"/>
</dbReference>
<dbReference type="DrugBank" id="DB12612">
    <property type="generic name" value="Ozanimod"/>
</dbReference>
<dbReference type="DrugBank" id="DB12371">
    <property type="generic name" value="Siponimod"/>
</dbReference>
<dbReference type="DrugCentral" id="Q9H228"/>
<dbReference type="GuidetoPHARMACOLOGY" id="279"/>
<dbReference type="GlyCosmos" id="Q9H228">
    <property type="glycosylation" value="1 site, No reported glycans"/>
</dbReference>
<dbReference type="GlyGen" id="Q9H228">
    <property type="glycosylation" value="2 sites"/>
</dbReference>
<dbReference type="iPTMnet" id="Q9H228"/>
<dbReference type="PhosphoSitePlus" id="Q9H228"/>
<dbReference type="SwissPalm" id="Q9H228"/>
<dbReference type="BioMuta" id="S1PR5"/>
<dbReference type="DMDM" id="62510663"/>
<dbReference type="MassIVE" id="Q9H228"/>
<dbReference type="PaxDb" id="9606-ENSP00000328472"/>
<dbReference type="PeptideAtlas" id="Q9H228"/>
<dbReference type="ProteomicsDB" id="80479">
    <molecule id="Q9H228-1"/>
</dbReference>
<dbReference type="ProteomicsDB" id="80480">
    <molecule id="Q9H228-2"/>
</dbReference>
<dbReference type="Antibodypedia" id="12897">
    <property type="antibodies" value="405 antibodies from 36 providers"/>
</dbReference>
<dbReference type="DNASU" id="53637"/>
<dbReference type="Ensembl" id="ENST00000333430.6">
    <molecule id="Q9H228-1"/>
    <property type="protein sequence ID" value="ENSP00000328472.3"/>
    <property type="gene ID" value="ENSG00000180739.15"/>
</dbReference>
<dbReference type="Ensembl" id="ENST00000439028.3">
    <molecule id="Q9H228-1"/>
    <property type="protein sequence ID" value="ENSP00000416915.2"/>
    <property type="gene ID" value="ENSG00000180739.15"/>
</dbReference>
<dbReference type="GeneID" id="53637"/>
<dbReference type="KEGG" id="hsa:53637"/>
<dbReference type="MANE-Select" id="ENST00000333430.6">
    <property type="protein sequence ID" value="ENSP00000328472.3"/>
    <property type="RefSeq nucleotide sequence ID" value="NM_030760.5"/>
    <property type="RefSeq protein sequence ID" value="NP_110387.1"/>
</dbReference>
<dbReference type="UCSC" id="uc002mot.2">
    <molecule id="Q9H228-1"/>
    <property type="organism name" value="human"/>
</dbReference>
<dbReference type="AGR" id="HGNC:14299"/>
<dbReference type="CTD" id="53637"/>
<dbReference type="DisGeNET" id="53637"/>
<dbReference type="GeneCards" id="S1PR5"/>
<dbReference type="HGNC" id="HGNC:14299">
    <property type="gene designation" value="S1PR5"/>
</dbReference>
<dbReference type="HPA" id="ENSG00000180739">
    <property type="expression patterns" value="Tissue enhanced (bone marrow, brain, skin)"/>
</dbReference>
<dbReference type="MIM" id="605146">
    <property type="type" value="gene"/>
</dbReference>
<dbReference type="neXtProt" id="NX_Q9H228"/>
<dbReference type="OpenTargets" id="ENSG00000180739"/>
<dbReference type="PharmGKB" id="PA162402378"/>
<dbReference type="VEuPathDB" id="HostDB:ENSG00000180739"/>
<dbReference type="eggNOG" id="ENOG502QSWN">
    <property type="taxonomic scope" value="Eukaryota"/>
</dbReference>
<dbReference type="GeneTree" id="ENSGT01050000244887"/>
<dbReference type="HOGENOM" id="CLU_047979_1_0_1"/>
<dbReference type="InParanoid" id="Q9H228"/>
<dbReference type="OMA" id="PCLMTRD"/>
<dbReference type="OrthoDB" id="9449747at2759"/>
<dbReference type="PAN-GO" id="Q9H228">
    <property type="GO annotations" value="5 GO annotations based on evolutionary models"/>
</dbReference>
<dbReference type="PhylomeDB" id="Q9H228"/>
<dbReference type="TreeFam" id="TF330052"/>
<dbReference type="PathwayCommons" id="Q9H228"/>
<dbReference type="Reactome" id="R-HSA-418594">
    <property type="pathway name" value="G alpha (i) signalling events"/>
</dbReference>
<dbReference type="Reactome" id="R-HSA-419408">
    <property type="pathway name" value="Lysosphingolipid and LPA receptors"/>
</dbReference>
<dbReference type="SignaLink" id="Q9H228"/>
<dbReference type="SIGNOR" id="Q9H228"/>
<dbReference type="BioGRID-ORCS" id="53637">
    <property type="hits" value="18 hits in 1154 CRISPR screens"/>
</dbReference>
<dbReference type="CD-CODE" id="8C2F96ED">
    <property type="entry name" value="Centrosome"/>
</dbReference>
<dbReference type="ChiTaRS" id="S1PR5">
    <property type="organism name" value="human"/>
</dbReference>
<dbReference type="GeneWiki" id="S1PR5"/>
<dbReference type="GenomeRNAi" id="53637"/>
<dbReference type="Pharos" id="Q9H228">
    <property type="development level" value="Tclin"/>
</dbReference>
<dbReference type="PRO" id="PR:Q9H228"/>
<dbReference type="Proteomes" id="UP000005640">
    <property type="component" value="Chromosome 19"/>
</dbReference>
<dbReference type="RNAct" id="Q9H228">
    <property type="molecule type" value="protein"/>
</dbReference>
<dbReference type="Bgee" id="ENSG00000180739">
    <property type="expression patterns" value="Expressed in granulocyte and 133 other cell types or tissues"/>
</dbReference>
<dbReference type="ExpressionAtlas" id="Q9H228">
    <property type="expression patterns" value="baseline and differential"/>
</dbReference>
<dbReference type="GO" id="GO:0005737">
    <property type="term" value="C:cytoplasm"/>
    <property type="evidence" value="ECO:0000318"/>
    <property type="project" value="GO_Central"/>
</dbReference>
<dbReference type="GO" id="GO:0005886">
    <property type="term" value="C:plasma membrane"/>
    <property type="evidence" value="ECO:0000318"/>
    <property type="project" value="GO_Central"/>
</dbReference>
<dbReference type="GO" id="GO:0098793">
    <property type="term" value="C:presynapse"/>
    <property type="evidence" value="ECO:0007669"/>
    <property type="project" value="Ensembl"/>
</dbReference>
<dbReference type="GO" id="GO:0004930">
    <property type="term" value="F:G protein-coupled receptor activity"/>
    <property type="evidence" value="ECO:0000318"/>
    <property type="project" value="GO_Central"/>
</dbReference>
<dbReference type="GO" id="GO:0038036">
    <property type="term" value="F:sphingosine-1-phosphate receptor activity"/>
    <property type="evidence" value="ECO:0007669"/>
    <property type="project" value="InterPro"/>
</dbReference>
<dbReference type="GO" id="GO:0007189">
    <property type="term" value="P:adenylate cyclase-activating G protein-coupled receptor signaling pathway"/>
    <property type="evidence" value="ECO:0000318"/>
    <property type="project" value="GO_Central"/>
</dbReference>
<dbReference type="GO" id="GO:0019222">
    <property type="term" value="P:regulation of metabolic process"/>
    <property type="evidence" value="ECO:0000318"/>
    <property type="project" value="GO_Central"/>
</dbReference>
<dbReference type="CDD" id="cd15348">
    <property type="entry name" value="7tmA_S1PR5_Edg8"/>
    <property type="match status" value="1"/>
</dbReference>
<dbReference type="FunFam" id="1.20.1070.10:FF:000251">
    <property type="entry name" value="Sphingosine 1-phosphate receptor 5"/>
    <property type="match status" value="1"/>
</dbReference>
<dbReference type="Gene3D" id="1.20.1070.10">
    <property type="entry name" value="Rhodopsin 7-helix transmembrane proteins"/>
    <property type="match status" value="1"/>
</dbReference>
<dbReference type="InterPro" id="IPR005386">
    <property type="entry name" value="EDG8_S1P_rcpt"/>
</dbReference>
<dbReference type="InterPro" id="IPR000276">
    <property type="entry name" value="GPCR_Rhodpsn"/>
</dbReference>
<dbReference type="InterPro" id="IPR017452">
    <property type="entry name" value="GPCR_Rhodpsn_7TM"/>
</dbReference>
<dbReference type="InterPro" id="IPR004061">
    <property type="entry name" value="S1P_rcpt"/>
</dbReference>
<dbReference type="PANTHER" id="PTHR22750">
    <property type="entry name" value="G-PROTEIN COUPLED RECEPTOR"/>
    <property type="match status" value="1"/>
</dbReference>
<dbReference type="Pfam" id="PF00001">
    <property type="entry name" value="7tm_1"/>
    <property type="match status" value="1"/>
</dbReference>
<dbReference type="PRINTS" id="PR01561">
    <property type="entry name" value="EDG8RECEPTOR"/>
</dbReference>
<dbReference type="PRINTS" id="PR00237">
    <property type="entry name" value="GPCRRHODOPSN"/>
</dbReference>
<dbReference type="PRINTS" id="PR01523">
    <property type="entry name" value="S1PRECEPTOR"/>
</dbReference>
<dbReference type="SUPFAM" id="SSF81321">
    <property type="entry name" value="Family A G protein-coupled receptor-like"/>
    <property type="match status" value="1"/>
</dbReference>
<dbReference type="PROSITE" id="PS00237">
    <property type="entry name" value="G_PROTEIN_RECEP_F1_1"/>
    <property type="match status" value="1"/>
</dbReference>
<dbReference type="PROSITE" id="PS50262">
    <property type="entry name" value="G_PROTEIN_RECEP_F1_2"/>
    <property type="match status" value="1"/>
</dbReference>
<organism>
    <name type="scientific">Homo sapiens</name>
    <name type="common">Human</name>
    <dbReference type="NCBI Taxonomy" id="9606"/>
    <lineage>
        <taxon>Eukaryota</taxon>
        <taxon>Metazoa</taxon>
        <taxon>Chordata</taxon>
        <taxon>Craniata</taxon>
        <taxon>Vertebrata</taxon>
        <taxon>Euteleostomi</taxon>
        <taxon>Mammalia</taxon>
        <taxon>Eutheria</taxon>
        <taxon>Euarchontoglires</taxon>
        <taxon>Primates</taxon>
        <taxon>Haplorrhini</taxon>
        <taxon>Catarrhini</taxon>
        <taxon>Hominidae</taxon>
        <taxon>Homo</taxon>
    </lineage>
</organism>
<feature type="chain" id="PRO_0000069436" description="Sphingosine 1-phosphate receptor 5">
    <location>
        <begin position="1"/>
        <end position="398"/>
    </location>
</feature>
<feature type="topological domain" description="Extracellular" evidence="1">
    <location>
        <begin position="1"/>
        <end position="40"/>
    </location>
</feature>
<feature type="transmembrane region" description="Helical; Name=1" evidence="1">
    <location>
        <begin position="41"/>
        <end position="61"/>
    </location>
</feature>
<feature type="topological domain" description="Cytoplasmic" evidence="1">
    <location>
        <begin position="62"/>
        <end position="70"/>
    </location>
</feature>
<feature type="transmembrane region" description="Helical; Name=2" evidence="1">
    <location>
        <begin position="71"/>
        <end position="91"/>
    </location>
</feature>
<feature type="topological domain" description="Extracellular" evidence="1">
    <location>
        <begin position="92"/>
        <end position="111"/>
    </location>
</feature>
<feature type="transmembrane region" description="Helical; Name=3" evidence="1">
    <location>
        <begin position="112"/>
        <end position="132"/>
    </location>
</feature>
<feature type="topological domain" description="Cytoplasmic" evidence="1">
    <location>
        <begin position="133"/>
        <end position="151"/>
    </location>
</feature>
<feature type="transmembrane region" description="Helical; Name=4" evidence="1">
    <location>
        <begin position="152"/>
        <end position="172"/>
    </location>
</feature>
<feature type="topological domain" description="Extracellular" evidence="1">
    <location>
        <begin position="173"/>
        <end position="192"/>
    </location>
</feature>
<feature type="transmembrane region" description="Helical; Name=5" evidence="1">
    <location>
        <begin position="193"/>
        <end position="213"/>
    </location>
</feature>
<feature type="topological domain" description="Cytoplasmic" evidence="1">
    <location>
        <begin position="214"/>
        <end position="252"/>
    </location>
</feature>
<feature type="transmembrane region" description="Helical; Name=6" evidence="1">
    <location>
        <begin position="253"/>
        <end position="273"/>
    </location>
</feature>
<feature type="topological domain" description="Extracellular" evidence="1">
    <location>
        <begin position="274"/>
        <end position="287"/>
    </location>
</feature>
<feature type="transmembrane region" description="Helical; Name=7" evidence="1">
    <location>
        <begin position="288"/>
        <end position="308"/>
    </location>
</feature>
<feature type="topological domain" description="Cytoplasmic" evidence="1">
    <location>
        <begin position="309"/>
        <end position="398"/>
    </location>
</feature>
<feature type="region of interest" description="Disordered" evidence="5">
    <location>
        <begin position="329"/>
        <end position="398"/>
    </location>
</feature>
<feature type="compositionally biased region" description="Low complexity" evidence="5">
    <location>
        <begin position="333"/>
        <end position="347"/>
    </location>
</feature>
<feature type="modified residue" description="Phosphoserine" evidence="2">
    <location>
        <position position="381"/>
    </location>
</feature>
<feature type="lipid moiety-binding region" description="S-palmitoyl cysteine" evidence="1">
    <location>
        <position position="323"/>
    </location>
</feature>
<feature type="glycosylation site" description="N-linked (GlcNAc...) asparagine" evidence="3">
    <location>
        <position position="20"/>
    </location>
</feature>
<feature type="splice variant" id="VSP_013369" description="In isoform 2." evidence="10">
    <original>RIYCQVRANARRLPARPGTAGTTSTRARRKPRSLALLRTLSVVLLAFVACWGPLFLLLLLDVACPARTCPVLLQADPFLGLAMANSLLNPIIYTLTN</original>
    <variation>LAGLAAHAQRGAPGLCGMLGPPHPAAVARRGVPGAHLSCTPAGRSLPGTGHGQLTSEPHHLHAHQPRPAPRAPAPGLLRTPLLRQRPEWLPAVGERG</variation>
    <location>
        <begin position="214"/>
        <end position="310"/>
    </location>
</feature>
<feature type="splice variant" id="VSP_013370" description="In isoform 2." evidence="10">
    <location>
        <begin position="311"/>
        <end position="398"/>
    </location>
</feature>
<feature type="sequence variant" id="VAR_033466" description="In dbSNP:rs35483143.">
    <original>L</original>
    <variation>Q</variation>
    <location>
        <position position="318"/>
    </location>
</feature>
<feature type="helix" evidence="12">
    <location>
        <begin position="13"/>
        <end position="21"/>
    </location>
</feature>
<feature type="turn" evidence="12">
    <location>
        <begin position="26"/>
        <end position="28"/>
    </location>
</feature>
<feature type="helix" evidence="12">
    <location>
        <begin position="38"/>
        <end position="63"/>
    </location>
</feature>
<feature type="helix" evidence="12">
    <location>
        <begin position="65"/>
        <end position="67"/>
    </location>
</feature>
<feature type="helix" evidence="12">
    <location>
        <begin position="70"/>
        <end position="94"/>
    </location>
</feature>
<feature type="helix" evidence="12">
    <location>
        <begin position="97"/>
        <end position="102"/>
    </location>
</feature>
<feature type="helix" evidence="12">
    <location>
        <begin position="105"/>
        <end position="133"/>
    </location>
</feature>
<feature type="strand" evidence="11">
    <location>
        <begin position="141"/>
        <end position="143"/>
    </location>
</feature>
<feature type="helix" evidence="12">
    <location>
        <begin position="148"/>
        <end position="171"/>
    </location>
</feature>
<feature type="strand" evidence="12">
    <location>
        <begin position="174"/>
        <end position="177"/>
    </location>
</feature>
<feature type="helix" evidence="12">
    <location>
        <begin position="179"/>
        <end position="181"/>
    </location>
</feature>
<feature type="strand" evidence="12">
    <location>
        <begin position="184"/>
        <end position="186"/>
    </location>
</feature>
<feature type="helix" evidence="12">
    <location>
        <begin position="191"/>
        <end position="223"/>
    </location>
</feature>
<feature type="helix" evidence="11">
    <location>
        <begin position="243"/>
        <end position="246"/>
    </location>
</feature>
<feature type="helix" evidence="12">
    <location>
        <begin position="250"/>
        <end position="276"/>
    </location>
</feature>
<feature type="helix" evidence="12">
    <location>
        <begin position="283"/>
        <end position="286"/>
    </location>
</feature>
<feature type="helix" evidence="12">
    <location>
        <begin position="289"/>
        <end position="309"/>
    </location>
</feature>
<feature type="helix" evidence="12">
    <location>
        <begin position="311"/>
        <end position="321"/>
    </location>
</feature>
<name>S1PR5_HUMAN</name>
<sequence length="398" mass="41775">MESGLLRPAPVSEVIVLHYNYTGKLRGARYQPGAGLRADAVVCLAVCAFIVLENLAVLLVLGRHPRFHAPMFLLLGSLTLSDLLAGAAYAANILLSGPLTLKLSPALWFAREGGVFVALTASVLSLLAIALERSLTMARRGPAPVSSRGRTLAMAAAAWGVSLLLGLLPALGWNCLGRLDACSTVLPLYAKAYVLFCVLAFVGILAAICALYARIYCQVRANARRLPARPGTAGTTSTRARRKPRSLALLRTLSVVLLAFVACWGPLFLLLLLDVACPARTCPVLLQADPFLGLAMANSLLNPIIYTLTNRDLRHALLRLVCCGRHSCGRDPSGSQQSASAAEASGGLRRCLPPGLDGSFSGSERSSPQRDGLDTSGSTGSPGAPTAARTLVSEPAAD</sequence>
<protein>
    <recommendedName>
        <fullName>Sphingosine 1-phosphate receptor 5</fullName>
        <shortName>S1P receptor 5</shortName>
        <shortName>S1P5</shortName>
    </recommendedName>
    <alternativeName>
        <fullName>Endothelial differentiation G-protein-coupled receptor 8</fullName>
    </alternativeName>
    <alternativeName>
        <fullName>Sphingosine 1-phosphate receptor Edg-8</fullName>
        <shortName>S1P receptor Edg-8</shortName>
    </alternativeName>
</protein>
<accession>Q9H228</accession>
<accession>Q6NW11</accession>
<gene>
    <name type="primary">S1PR5</name>
    <name type="synonym">EDG8</name>
</gene>
<reference key="1">
    <citation type="journal article" date="2002" name="Biochim. Biophys. Acta">
        <title>Characterization of a human sphingosine-1-phosphate receptor gene (S1P5) and its differential expression in LGL leukemia.</title>
        <authorList>
            <person name="Kothapalli R."/>
            <person name="Kusmartseva I."/>
            <person name="Loughran T.P. Jr."/>
        </authorList>
    </citation>
    <scope>NUCLEOTIDE SEQUENCE [MRNA] (ISOFORM 1)</scope>
    <scope>TISSUE SPECIFICITY</scope>
    <source>
        <tissue>Lymphocyte</tissue>
    </source>
</reference>
<reference key="2">
    <citation type="journal article" date="2004" name="Nat. Genet.">
        <title>Complete sequencing and characterization of 21,243 full-length human cDNAs.</title>
        <authorList>
            <person name="Ota T."/>
            <person name="Suzuki Y."/>
            <person name="Nishikawa T."/>
            <person name="Otsuki T."/>
            <person name="Sugiyama T."/>
            <person name="Irie R."/>
            <person name="Wakamatsu A."/>
            <person name="Hayashi K."/>
            <person name="Sato H."/>
            <person name="Nagai K."/>
            <person name="Kimura K."/>
            <person name="Makita H."/>
            <person name="Sekine M."/>
            <person name="Obayashi M."/>
            <person name="Nishi T."/>
            <person name="Shibahara T."/>
            <person name="Tanaka T."/>
            <person name="Ishii S."/>
            <person name="Yamamoto J."/>
            <person name="Saito K."/>
            <person name="Kawai Y."/>
            <person name="Isono Y."/>
            <person name="Nakamura Y."/>
            <person name="Nagahari K."/>
            <person name="Murakami K."/>
            <person name="Yasuda T."/>
            <person name="Iwayanagi T."/>
            <person name="Wagatsuma M."/>
            <person name="Shiratori A."/>
            <person name="Sudo H."/>
            <person name="Hosoiri T."/>
            <person name="Kaku Y."/>
            <person name="Kodaira H."/>
            <person name="Kondo H."/>
            <person name="Sugawara M."/>
            <person name="Takahashi M."/>
            <person name="Kanda K."/>
            <person name="Yokoi T."/>
            <person name="Furuya T."/>
            <person name="Kikkawa E."/>
            <person name="Omura Y."/>
            <person name="Abe K."/>
            <person name="Kamihara K."/>
            <person name="Katsuta N."/>
            <person name="Sato K."/>
            <person name="Tanikawa M."/>
            <person name="Yamazaki M."/>
            <person name="Ninomiya K."/>
            <person name="Ishibashi T."/>
            <person name="Yamashita H."/>
            <person name="Murakawa K."/>
            <person name="Fujimori K."/>
            <person name="Tanai H."/>
            <person name="Kimata M."/>
            <person name="Watanabe M."/>
            <person name="Hiraoka S."/>
            <person name="Chiba Y."/>
            <person name="Ishida S."/>
            <person name="Ono Y."/>
            <person name="Takiguchi S."/>
            <person name="Watanabe S."/>
            <person name="Yosida M."/>
            <person name="Hotuta T."/>
            <person name="Kusano J."/>
            <person name="Kanehori K."/>
            <person name="Takahashi-Fujii A."/>
            <person name="Hara H."/>
            <person name="Tanase T.-O."/>
            <person name="Nomura Y."/>
            <person name="Togiya S."/>
            <person name="Komai F."/>
            <person name="Hara R."/>
            <person name="Takeuchi K."/>
            <person name="Arita M."/>
            <person name="Imose N."/>
            <person name="Musashino K."/>
            <person name="Yuuki H."/>
            <person name="Oshima A."/>
            <person name="Sasaki N."/>
            <person name="Aotsuka S."/>
            <person name="Yoshikawa Y."/>
            <person name="Matsunawa H."/>
            <person name="Ichihara T."/>
            <person name="Shiohata N."/>
            <person name="Sano S."/>
            <person name="Moriya S."/>
            <person name="Momiyama H."/>
            <person name="Satoh N."/>
            <person name="Takami S."/>
            <person name="Terashima Y."/>
            <person name="Suzuki O."/>
            <person name="Nakagawa S."/>
            <person name="Senoh A."/>
            <person name="Mizoguchi H."/>
            <person name="Goto Y."/>
            <person name="Shimizu F."/>
            <person name="Wakebe H."/>
            <person name="Hishigaki H."/>
            <person name="Watanabe T."/>
            <person name="Sugiyama A."/>
            <person name="Takemoto M."/>
            <person name="Kawakami B."/>
            <person name="Yamazaki M."/>
            <person name="Watanabe K."/>
            <person name="Kumagai A."/>
            <person name="Itakura S."/>
            <person name="Fukuzumi Y."/>
            <person name="Fujimori Y."/>
            <person name="Komiyama M."/>
            <person name="Tashiro H."/>
            <person name="Tanigami A."/>
            <person name="Fujiwara T."/>
            <person name="Ono T."/>
            <person name="Yamada K."/>
            <person name="Fujii Y."/>
            <person name="Ozaki K."/>
            <person name="Hirao M."/>
            <person name="Ohmori Y."/>
            <person name="Kawabata A."/>
            <person name="Hikiji T."/>
            <person name="Kobatake N."/>
            <person name="Inagaki H."/>
            <person name="Ikema Y."/>
            <person name="Okamoto S."/>
            <person name="Okitani R."/>
            <person name="Kawakami T."/>
            <person name="Noguchi S."/>
            <person name="Itoh T."/>
            <person name="Shigeta K."/>
            <person name="Senba T."/>
            <person name="Matsumura K."/>
            <person name="Nakajima Y."/>
            <person name="Mizuno T."/>
            <person name="Morinaga M."/>
            <person name="Sasaki M."/>
            <person name="Togashi T."/>
            <person name="Oyama M."/>
            <person name="Hata H."/>
            <person name="Watanabe M."/>
            <person name="Komatsu T."/>
            <person name="Mizushima-Sugano J."/>
            <person name="Satoh T."/>
            <person name="Shirai Y."/>
            <person name="Takahashi Y."/>
            <person name="Nakagawa K."/>
            <person name="Okumura K."/>
            <person name="Nagase T."/>
            <person name="Nomura N."/>
            <person name="Kikuchi H."/>
            <person name="Masuho Y."/>
            <person name="Yamashita R."/>
            <person name="Nakai K."/>
            <person name="Yada T."/>
            <person name="Nakamura Y."/>
            <person name="Ohara O."/>
            <person name="Isogai T."/>
            <person name="Sugano S."/>
        </authorList>
    </citation>
    <scope>NUCLEOTIDE SEQUENCE [LARGE SCALE MRNA] (ISOFORM 1)</scope>
    <source>
        <tissue>Mammary gland</tissue>
    </source>
</reference>
<reference key="3">
    <citation type="journal article" date="2001" name="Biochemistry">
        <title>Characterization of the human and mouse sphingosine 1-phosphate receptor, S1P5 (Edg-8): structure-activity relationship of sphingosine1-phosphate receptors.</title>
        <authorList>
            <person name="Im D.-S."/>
            <person name="Clemens J."/>
            <person name="Macdonald T.L."/>
            <person name="Lynch K.R."/>
        </authorList>
    </citation>
    <scope>NUCLEOTIDE SEQUENCE [GENOMIC DNA]</scope>
    <scope>TISSUE SPECIFICITY</scope>
</reference>
<reference key="4">
    <citation type="submission" date="2003-03" db="EMBL/GenBank/DDBJ databases">
        <title>Isolation of complete coding sequence for endothelial differentiation, sphingolipid GPCR 8 (EDG8).</title>
        <authorList>
            <person name="Kopatz S.A."/>
            <person name="Aronstam R.S."/>
            <person name="Sharma S.V."/>
        </authorList>
    </citation>
    <scope>NUCLEOTIDE SEQUENCE [GENOMIC DNA]</scope>
</reference>
<reference key="5">
    <citation type="journal article" date="2002" name="FEBS Lett.">
        <title>Identification of G protein-coupled receptor genes from the human genome sequence.</title>
        <authorList>
            <person name="Takeda S."/>
            <person name="Kadowaki S."/>
            <person name="Haga T."/>
            <person name="Takaesu H."/>
            <person name="Mitaku S."/>
        </authorList>
    </citation>
    <scope>NUCLEOTIDE SEQUENCE [LARGE SCALE GENOMIC DNA]</scope>
</reference>
<reference key="6">
    <citation type="journal article" date="2002" name="FEBS Lett.">
        <authorList>
            <person name="Takeda S."/>
            <person name="Kadowaki S."/>
            <person name="Haga T."/>
            <person name="Takaesu H."/>
            <person name="Mitaku S."/>
        </authorList>
    </citation>
    <scope>ERRATUM OF PUBMED:12044878</scope>
</reference>
<reference key="7">
    <citation type="journal article" date="2004" name="Nature">
        <title>The DNA sequence and biology of human chromosome 19.</title>
        <authorList>
            <person name="Grimwood J."/>
            <person name="Gordon L.A."/>
            <person name="Olsen A.S."/>
            <person name="Terry A."/>
            <person name="Schmutz J."/>
            <person name="Lamerdin J.E."/>
            <person name="Hellsten U."/>
            <person name="Goodstein D."/>
            <person name="Couronne O."/>
            <person name="Tran-Gyamfi M."/>
            <person name="Aerts A."/>
            <person name="Altherr M."/>
            <person name="Ashworth L."/>
            <person name="Bajorek E."/>
            <person name="Black S."/>
            <person name="Branscomb E."/>
            <person name="Caenepeel S."/>
            <person name="Carrano A.V."/>
            <person name="Caoile C."/>
            <person name="Chan Y.M."/>
            <person name="Christensen M."/>
            <person name="Cleland C.A."/>
            <person name="Copeland A."/>
            <person name="Dalin E."/>
            <person name="Dehal P."/>
            <person name="Denys M."/>
            <person name="Detter J.C."/>
            <person name="Escobar J."/>
            <person name="Flowers D."/>
            <person name="Fotopulos D."/>
            <person name="Garcia C."/>
            <person name="Georgescu A.M."/>
            <person name="Glavina T."/>
            <person name="Gomez M."/>
            <person name="Gonzales E."/>
            <person name="Groza M."/>
            <person name="Hammon N."/>
            <person name="Hawkins T."/>
            <person name="Haydu L."/>
            <person name="Ho I."/>
            <person name="Huang W."/>
            <person name="Israni S."/>
            <person name="Jett J."/>
            <person name="Kadner K."/>
            <person name="Kimball H."/>
            <person name="Kobayashi A."/>
            <person name="Larionov V."/>
            <person name="Leem S.-H."/>
            <person name="Lopez F."/>
            <person name="Lou Y."/>
            <person name="Lowry S."/>
            <person name="Malfatti S."/>
            <person name="Martinez D."/>
            <person name="McCready P.M."/>
            <person name="Medina C."/>
            <person name="Morgan J."/>
            <person name="Nelson K."/>
            <person name="Nolan M."/>
            <person name="Ovcharenko I."/>
            <person name="Pitluck S."/>
            <person name="Pollard M."/>
            <person name="Popkie A.P."/>
            <person name="Predki P."/>
            <person name="Quan G."/>
            <person name="Ramirez L."/>
            <person name="Rash S."/>
            <person name="Retterer J."/>
            <person name="Rodriguez A."/>
            <person name="Rogers S."/>
            <person name="Salamov A."/>
            <person name="Salazar A."/>
            <person name="She X."/>
            <person name="Smith D."/>
            <person name="Slezak T."/>
            <person name="Solovyev V."/>
            <person name="Thayer N."/>
            <person name="Tice H."/>
            <person name="Tsai M."/>
            <person name="Ustaszewska A."/>
            <person name="Vo N."/>
            <person name="Wagner M."/>
            <person name="Wheeler J."/>
            <person name="Wu K."/>
            <person name="Xie G."/>
            <person name="Yang J."/>
            <person name="Dubchak I."/>
            <person name="Furey T.S."/>
            <person name="DeJong P."/>
            <person name="Dickson M."/>
            <person name="Gordon D."/>
            <person name="Eichler E.E."/>
            <person name="Pennacchio L.A."/>
            <person name="Richardson P."/>
            <person name="Stubbs L."/>
            <person name="Rokhsar D.S."/>
            <person name="Myers R.M."/>
            <person name="Rubin E.M."/>
            <person name="Lucas S.M."/>
        </authorList>
    </citation>
    <scope>NUCLEOTIDE SEQUENCE [LARGE SCALE GENOMIC DNA]</scope>
</reference>
<reference key="8">
    <citation type="journal article" date="2004" name="Genome Res.">
        <title>The status, quality, and expansion of the NIH full-length cDNA project: the Mammalian Gene Collection (MGC).</title>
        <authorList>
            <consortium name="The MGC Project Team"/>
        </authorList>
    </citation>
    <scope>NUCLEOTIDE SEQUENCE [LARGE SCALE MRNA] (ISOFORMS 1 AND 2)</scope>
    <source>
        <tissue>Skin</tissue>
    </source>
</reference>
<reference key="9">
    <citation type="journal article" date="2002" name="Biochem. Pharmacol.">
        <title>Comparative analysis of human and rat S1P(5) (edg8): differential expression profiles and sensitivities to antagonists.</title>
        <authorList>
            <person name="Niedernberg A."/>
            <person name="Scherer C.R."/>
            <person name="Busch A.E."/>
            <person name="Kostenis E."/>
        </authorList>
    </citation>
    <scope>TISSUE SPECIFICITY</scope>
</reference>
<reference key="10">
    <citation type="journal article" date="2004" name="Acta Histochem.">
        <title>Evidence for the presence of the sphingosine-1-phosphate receptor Edg-8 in human radial glial fibers.</title>
        <authorList>
            <person name="Ulfig N."/>
            <person name="Briese M."/>
        </authorList>
    </citation>
    <scope>DEVELOPMENTAL STAGE</scope>
    <scope>POSSIBLE FUNCTION</scope>
</reference>